<dbReference type="EMBL" id="CP000685">
    <property type="protein sequence ID" value="ABQ04093.1"/>
    <property type="molecule type" value="Genomic_DNA"/>
</dbReference>
<dbReference type="RefSeq" id="WP_012023145.1">
    <property type="nucleotide sequence ID" value="NC_009441.1"/>
</dbReference>
<dbReference type="SMR" id="A5FL19"/>
<dbReference type="STRING" id="376686.Fjoh_1060"/>
<dbReference type="KEGG" id="fjo:Fjoh_1060"/>
<dbReference type="eggNOG" id="COG0224">
    <property type="taxonomic scope" value="Bacteria"/>
</dbReference>
<dbReference type="HOGENOM" id="CLU_050669_0_1_10"/>
<dbReference type="OrthoDB" id="9812769at2"/>
<dbReference type="Proteomes" id="UP000006694">
    <property type="component" value="Chromosome"/>
</dbReference>
<dbReference type="GO" id="GO:0005886">
    <property type="term" value="C:plasma membrane"/>
    <property type="evidence" value="ECO:0007669"/>
    <property type="project" value="UniProtKB-SubCell"/>
</dbReference>
<dbReference type="GO" id="GO:0045259">
    <property type="term" value="C:proton-transporting ATP synthase complex"/>
    <property type="evidence" value="ECO:0007669"/>
    <property type="project" value="UniProtKB-KW"/>
</dbReference>
<dbReference type="GO" id="GO:0005524">
    <property type="term" value="F:ATP binding"/>
    <property type="evidence" value="ECO:0007669"/>
    <property type="project" value="UniProtKB-UniRule"/>
</dbReference>
<dbReference type="GO" id="GO:0046933">
    <property type="term" value="F:proton-transporting ATP synthase activity, rotational mechanism"/>
    <property type="evidence" value="ECO:0007669"/>
    <property type="project" value="UniProtKB-UniRule"/>
</dbReference>
<dbReference type="GO" id="GO:0042777">
    <property type="term" value="P:proton motive force-driven plasma membrane ATP synthesis"/>
    <property type="evidence" value="ECO:0007669"/>
    <property type="project" value="UniProtKB-UniRule"/>
</dbReference>
<dbReference type="CDD" id="cd12151">
    <property type="entry name" value="F1-ATPase_gamma"/>
    <property type="match status" value="1"/>
</dbReference>
<dbReference type="Gene3D" id="3.40.1380.10">
    <property type="match status" value="1"/>
</dbReference>
<dbReference type="Gene3D" id="1.10.287.80">
    <property type="entry name" value="ATP synthase, gamma subunit, helix hairpin domain"/>
    <property type="match status" value="1"/>
</dbReference>
<dbReference type="HAMAP" id="MF_00815">
    <property type="entry name" value="ATP_synth_gamma_bact"/>
    <property type="match status" value="1"/>
</dbReference>
<dbReference type="InterPro" id="IPR035968">
    <property type="entry name" value="ATP_synth_F1_ATPase_gsu"/>
</dbReference>
<dbReference type="InterPro" id="IPR000131">
    <property type="entry name" value="ATP_synth_F1_gsu"/>
</dbReference>
<dbReference type="InterPro" id="IPR023632">
    <property type="entry name" value="ATP_synth_F1_gsu_CS"/>
</dbReference>
<dbReference type="NCBIfam" id="TIGR01146">
    <property type="entry name" value="ATPsyn_F1gamma"/>
    <property type="match status" value="1"/>
</dbReference>
<dbReference type="PANTHER" id="PTHR11693">
    <property type="entry name" value="ATP SYNTHASE GAMMA CHAIN"/>
    <property type="match status" value="1"/>
</dbReference>
<dbReference type="PANTHER" id="PTHR11693:SF22">
    <property type="entry name" value="ATP SYNTHASE SUBUNIT GAMMA, MITOCHONDRIAL"/>
    <property type="match status" value="1"/>
</dbReference>
<dbReference type="Pfam" id="PF00231">
    <property type="entry name" value="ATP-synt"/>
    <property type="match status" value="1"/>
</dbReference>
<dbReference type="PRINTS" id="PR00126">
    <property type="entry name" value="ATPASEGAMMA"/>
</dbReference>
<dbReference type="SUPFAM" id="SSF52943">
    <property type="entry name" value="ATP synthase (F1-ATPase), gamma subunit"/>
    <property type="match status" value="1"/>
</dbReference>
<dbReference type="PROSITE" id="PS00153">
    <property type="entry name" value="ATPASE_GAMMA"/>
    <property type="match status" value="1"/>
</dbReference>
<feature type="chain" id="PRO_1000083786" description="ATP synthase gamma chain">
    <location>
        <begin position="1"/>
        <end position="286"/>
    </location>
</feature>
<comment type="function">
    <text evidence="1">Produces ATP from ADP in the presence of a proton gradient across the membrane. The gamma chain is believed to be important in regulating ATPase activity and the flow of protons through the CF(0) complex.</text>
</comment>
<comment type="subunit">
    <text evidence="1">F-type ATPases have 2 components, CF(1) - the catalytic core - and CF(0) - the membrane proton channel. CF(1) has five subunits: alpha(3), beta(3), gamma(1), delta(1), epsilon(1). CF(0) has three main subunits: a, b and c.</text>
</comment>
<comment type="subcellular location">
    <subcellularLocation>
        <location evidence="1">Cell inner membrane</location>
        <topology evidence="1">Peripheral membrane protein</topology>
    </subcellularLocation>
</comment>
<comment type="similarity">
    <text evidence="1">Belongs to the ATPase gamma chain family.</text>
</comment>
<organism>
    <name type="scientific">Flavobacterium johnsoniae (strain ATCC 17061 / DSM 2064 / JCM 8514 / BCRC 14874 / CCUG 350202 / NBRC 14942 / NCIMB 11054 / UW101)</name>
    <name type="common">Cytophaga johnsonae</name>
    <dbReference type="NCBI Taxonomy" id="376686"/>
    <lineage>
        <taxon>Bacteria</taxon>
        <taxon>Pseudomonadati</taxon>
        <taxon>Bacteroidota</taxon>
        <taxon>Flavobacteriia</taxon>
        <taxon>Flavobacteriales</taxon>
        <taxon>Flavobacteriaceae</taxon>
        <taxon>Flavobacterium</taxon>
    </lineage>
</organism>
<name>ATPG_FLAJ1</name>
<accession>A5FL19</accession>
<reference key="1">
    <citation type="journal article" date="2009" name="Appl. Environ. Microbiol.">
        <title>Novel features of the polysaccharide-digesting gliding bacterium Flavobacterium johnsoniae as revealed by genome sequence analysis.</title>
        <authorList>
            <person name="McBride M.J."/>
            <person name="Xie G."/>
            <person name="Martens E.C."/>
            <person name="Lapidus A."/>
            <person name="Henrissat B."/>
            <person name="Rhodes R.G."/>
            <person name="Goltsman E."/>
            <person name="Wang W."/>
            <person name="Xu J."/>
            <person name="Hunnicutt D.W."/>
            <person name="Staroscik A.M."/>
            <person name="Hoover T.R."/>
            <person name="Cheng Y.Q."/>
            <person name="Stein J.L."/>
        </authorList>
    </citation>
    <scope>NUCLEOTIDE SEQUENCE [LARGE SCALE GENOMIC DNA]</scope>
    <source>
        <strain>ATCC 17061 / DSM 2064 / JCM 8514 / BCRC 14874 / CCUG 350202 / NBRC 14942 / NCIMB 11054 / UW101</strain>
    </source>
</reference>
<evidence type="ECO:0000255" key="1">
    <source>
        <dbReference type="HAMAP-Rule" id="MF_00815"/>
    </source>
</evidence>
<sequence length="286" mass="31464">MANLKEIRNRITSVSSTMQITSAMKMVSAAKLKKAQDAITAMRPYAEKLTELLQNLSATLEGEVGGAYTTQREVKKVLLVAITSNRGLCGAFNSNVIKEIKNRTDFYAGKQVDVFAIGKKGNDVLSKTHKVHGHHNAIFDHLTFENVAGIADNLTEKFLSGEYDKIELIYNQFKNAATQIVQTEQFLPLAPLKSEVSASAGDYIFEPSKEEIVLTLIPKSLKTQLYKGIRDSFASEHGARMTAMHKATDNATELRNQLKLTYNKARQAAITNEILEIVGGAEALNG</sequence>
<proteinExistence type="inferred from homology"/>
<protein>
    <recommendedName>
        <fullName evidence="1">ATP synthase gamma chain</fullName>
    </recommendedName>
    <alternativeName>
        <fullName evidence="1">ATP synthase F1 sector gamma subunit</fullName>
    </alternativeName>
    <alternativeName>
        <fullName evidence="1">F-ATPase gamma subunit</fullName>
    </alternativeName>
</protein>
<gene>
    <name evidence="1" type="primary">atpG</name>
    <name type="ordered locus">Fjoh_1060</name>
</gene>
<keyword id="KW-0066">ATP synthesis</keyword>
<keyword id="KW-0997">Cell inner membrane</keyword>
<keyword id="KW-1003">Cell membrane</keyword>
<keyword id="KW-0139">CF(1)</keyword>
<keyword id="KW-0375">Hydrogen ion transport</keyword>
<keyword id="KW-0406">Ion transport</keyword>
<keyword id="KW-0472">Membrane</keyword>
<keyword id="KW-0813">Transport</keyword>